<evidence type="ECO:0000255" key="1">
    <source>
        <dbReference type="HAMAP-Rule" id="MF_01635"/>
    </source>
</evidence>
<evidence type="ECO:0000305" key="2"/>
<feature type="chain" id="PRO_0000262837" description="4-hydroxybenzoate octaprenyltransferase">
    <location>
        <begin position="1"/>
        <end position="293"/>
    </location>
</feature>
<feature type="transmembrane region" description="Helical" evidence="1">
    <location>
        <begin position="26"/>
        <end position="46"/>
    </location>
</feature>
<feature type="transmembrane region" description="Helical" evidence="1">
    <location>
        <begin position="49"/>
        <end position="69"/>
    </location>
</feature>
<feature type="transmembrane region" description="Helical" evidence="1">
    <location>
        <begin position="102"/>
        <end position="122"/>
    </location>
</feature>
<feature type="transmembrane region" description="Helical" evidence="1">
    <location>
        <begin position="148"/>
        <end position="168"/>
    </location>
</feature>
<feature type="transmembrane region" description="Helical" evidence="1">
    <location>
        <begin position="173"/>
        <end position="193"/>
    </location>
</feature>
<feature type="transmembrane region" description="Helical" evidence="1">
    <location>
        <begin position="217"/>
        <end position="237"/>
    </location>
</feature>
<feature type="transmembrane region" description="Helical" evidence="1">
    <location>
        <begin position="240"/>
        <end position="260"/>
    </location>
</feature>
<feature type="transmembrane region" description="Helical" evidence="1">
    <location>
        <begin position="272"/>
        <end position="292"/>
    </location>
</feature>
<protein>
    <recommendedName>
        <fullName evidence="1">4-hydroxybenzoate octaprenyltransferase</fullName>
        <ecNumber evidence="1">2.5.1.39</ecNumber>
    </recommendedName>
    <alternativeName>
        <fullName evidence="1">4-HB polyprenyltransferase</fullName>
    </alternativeName>
</protein>
<comment type="function">
    <text evidence="1">Catalyzes the prenylation of para-hydroxybenzoate (PHB) with an all-trans polyprenyl group. Mediates the second step in the final reaction sequence of ubiquinone-8 (UQ-8) biosynthesis, which is the condensation of the polyisoprenoid side chain with PHB, generating the first membrane-bound Q intermediate 3-octaprenyl-4-hydroxybenzoate.</text>
</comment>
<comment type="catalytic activity">
    <reaction evidence="1">
        <text>all-trans-octaprenyl diphosphate + 4-hydroxybenzoate = 4-hydroxy-3-(all-trans-octaprenyl)benzoate + diphosphate</text>
        <dbReference type="Rhea" id="RHEA:27782"/>
        <dbReference type="ChEBI" id="CHEBI:1617"/>
        <dbReference type="ChEBI" id="CHEBI:17879"/>
        <dbReference type="ChEBI" id="CHEBI:33019"/>
        <dbReference type="ChEBI" id="CHEBI:57711"/>
        <dbReference type="EC" id="2.5.1.39"/>
    </reaction>
</comment>
<comment type="cofactor">
    <cofactor evidence="1">
        <name>Mg(2+)</name>
        <dbReference type="ChEBI" id="CHEBI:18420"/>
    </cofactor>
</comment>
<comment type="pathway">
    <text evidence="1">Cofactor biosynthesis; ubiquinone biosynthesis.</text>
</comment>
<comment type="subcellular location">
    <subcellularLocation>
        <location evidence="1">Cell inner membrane</location>
        <topology evidence="1">Multi-pass membrane protein</topology>
    </subcellularLocation>
</comment>
<comment type="similarity">
    <text evidence="1">Belongs to the UbiA prenyltransferase family.</text>
</comment>
<comment type="sequence caution" evidence="2">
    <conflict type="erroneous initiation">
        <sequence resource="EMBL-CDS" id="ABE53775"/>
    </conflict>
</comment>
<name>UBIA_SHEDO</name>
<accession>Q12S01</accession>
<dbReference type="EC" id="2.5.1.39" evidence="1"/>
<dbReference type="EMBL" id="CP000302">
    <property type="protein sequence ID" value="ABE53775.1"/>
    <property type="status" value="ALT_INIT"/>
    <property type="molecule type" value="Genomic_DNA"/>
</dbReference>
<dbReference type="SMR" id="Q12S01"/>
<dbReference type="STRING" id="318161.Sden_0483"/>
<dbReference type="KEGG" id="sdn:Sden_0483"/>
<dbReference type="eggNOG" id="COG0382">
    <property type="taxonomic scope" value="Bacteria"/>
</dbReference>
<dbReference type="HOGENOM" id="CLU_034879_1_0_6"/>
<dbReference type="OrthoDB" id="9782418at2"/>
<dbReference type="UniPathway" id="UPA00232"/>
<dbReference type="Proteomes" id="UP000001982">
    <property type="component" value="Chromosome"/>
</dbReference>
<dbReference type="GO" id="GO:0005886">
    <property type="term" value="C:plasma membrane"/>
    <property type="evidence" value="ECO:0007669"/>
    <property type="project" value="UniProtKB-SubCell"/>
</dbReference>
<dbReference type="GO" id="GO:0008412">
    <property type="term" value="F:4-hydroxybenzoate polyprenyltransferase activity"/>
    <property type="evidence" value="ECO:0007669"/>
    <property type="project" value="UniProtKB-UniRule"/>
</dbReference>
<dbReference type="GO" id="GO:0006744">
    <property type="term" value="P:ubiquinone biosynthetic process"/>
    <property type="evidence" value="ECO:0007669"/>
    <property type="project" value="UniProtKB-UniRule"/>
</dbReference>
<dbReference type="CDD" id="cd13959">
    <property type="entry name" value="PT_UbiA_COQ2"/>
    <property type="match status" value="1"/>
</dbReference>
<dbReference type="FunFam" id="1.10.357.140:FF:000002">
    <property type="entry name" value="4-hydroxybenzoate octaprenyltransferase"/>
    <property type="match status" value="1"/>
</dbReference>
<dbReference type="FunFam" id="1.20.120.1780:FF:000001">
    <property type="entry name" value="4-hydroxybenzoate octaprenyltransferase"/>
    <property type="match status" value="1"/>
</dbReference>
<dbReference type="Gene3D" id="1.10.357.140">
    <property type="entry name" value="UbiA prenyltransferase"/>
    <property type="match status" value="1"/>
</dbReference>
<dbReference type="Gene3D" id="1.20.120.1780">
    <property type="entry name" value="UbiA prenyltransferase"/>
    <property type="match status" value="1"/>
</dbReference>
<dbReference type="HAMAP" id="MF_01635">
    <property type="entry name" value="UbiA"/>
    <property type="match status" value="1"/>
</dbReference>
<dbReference type="InterPro" id="IPR006370">
    <property type="entry name" value="HB_polyprenyltransferase-like"/>
</dbReference>
<dbReference type="InterPro" id="IPR039653">
    <property type="entry name" value="Prenyltransferase"/>
</dbReference>
<dbReference type="InterPro" id="IPR000537">
    <property type="entry name" value="UbiA_prenyltransferase"/>
</dbReference>
<dbReference type="InterPro" id="IPR030470">
    <property type="entry name" value="UbiA_prenylTrfase_CS"/>
</dbReference>
<dbReference type="InterPro" id="IPR044878">
    <property type="entry name" value="UbiA_sf"/>
</dbReference>
<dbReference type="NCBIfam" id="TIGR01474">
    <property type="entry name" value="ubiA_proteo"/>
    <property type="match status" value="1"/>
</dbReference>
<dbReference type="PANTHER" id="PTHR11048:SF28">
    <property type="entry name" value="4-HYDROXYBENZOATE POLYPRENYLTRANSFERASE, MITOCHONDRIAL"/>
    <property type="match status" value="1"/>
</dbReference>
<dbReference type="PANTHER" id="PTHR11048">
    <property type="entry name" value="PRENYLTRANSFERASES"/>
    <property type="match status" value="1"/>
</dbReference>
<dbReference type="Pfam" id="PF01040">
    <property type="entry name" value="UbiA"/>
    <property type="match status" value="1"/>
</dbReference>
<dbReference type="PROSITE" id="PS00943">
    <property type="entry name" value="UBIA"/>
    <property type="match status" value="1"/>
</dbReference>
<proteinExistence type="inferred from homology"/>
<sequence length="293" mass="33001">MTAQTQQSIMAKLALYAQLSRIDRPIGTLLLLWPCLMALLFAAKGMPDIKVLLIFILGVVIMRACGCIINDYADRNLDAHVERTKQRPLASGAISSKEALSLFALLGLLAFALVLLLNPLVVKLSVVGIVLTIMYPFMKRVTNMPQMFLGIVWSWSIPMAYAAQLGEVPVEAWWLFAANWCWTVAYDTMYAMIDRDDDLKVGIKSSAILFGRFDRQWIAVFQLMAFGCFLMAGLSAEREFIYALGLLGFIAFSVYQQRLIFSRERPACFKAFLNNNWVGMLLFLTLAADYLLY</sequence>
<gene>
    <name evidence="1" type="primary">ubiA</name>
    <name type="ordered locus">Sden_0483</name>
</gene>
<keyword id="KW-0997">Cell inner membrane</keyword>
<keyword id="KW-1003">Cell membrane</keyword>
<keyword id="KW-0460">Magnesium</keyword>
<keyword id="KW-0472">Membrane</keyword>
<keyword id="KW-1185">Reference proteome</keyword>
<keyword id="KW-0808">Transferase</keyword>
<keyword id="KW-0812">Transmembrane</keyword>
<keyword id="KW-1133">Transmembrane helix</keyword>
<keyword id="KW-0831">Ubiquinone biosynthesis</keyword>
<organism>
    <name type="scientific">Shewanella denitrificans (strain OS217 / ATCC BAA-1090 / DSM 15013)</name>
    <dbReference type="NCBI Taxonomy" id="318161"/>
    <lineage>
        <taxon>Bacteria</taxon>
        <taxon>Pseudomonadati</taxon>
        <taxon>Pseudomonadota</taxon>
        <taxon>Gammaproteobacteria</taxon>
        <taxon>Alteromonadales</taxon>
        <taxon>Shewanellaceae</taxon>
        <taxon>Shewanella</taxon>
    </lineage>
</organism>
<reference key="1">
    <citation type="submission" date="2006-03" db="EMBL/GenBank/DDBJ databases">
        <title>Complete sequence of Shewanella denitrificans OS217.</title>
        <authorList>
            <consortium name="US DOE Joint Genome Institute"/>
            <person name="Copeland A."/>
            <person name="Lucas S."/>
            <person name="Lapidus A."/>
            <person name="Barry K."/>
            <person name="Detter J.C."/>
            <person name="Glavina del Rio T."/>
            <person name="Hammon N."/>
            <person name="Israni S."/>
            <person name="Dalin E."/>
            <person name="Tice H."/>
            <person name="Pitluck S."/>
            <person name="Brettin T."/>
            <person name="Bruce D."/>
            <person name="Han C."/>
            <person name="Tapia R."/>
            <person name="Gilna P."/>
            <person name="Kiss H."/>
            <person name="Schmutz J."/>
            <person name="Larimer F."/>
            <person name="Land M."/>
            <person name="Hauser L."/>
            <person name="Kyrpides N."/>
            <person name="Lykidis A."/>
            <person name="Richardson P."/>
        </authorList>
    </citation>
    <scope>NUCLEOTIDE SEQUENCE [LARGE SCALE GENOMIC DNA]</scope>
    <source>
        <strain>OS217 / ATCC BAA-1090 / DSM 15013</strain>
    </source>
</reference>